<comment type="function">
    <text evidence="1">Involved in transcription antitermination. Required for transcription of ribosomal RNA (rRNA) genes. Binds specifically to the boxA antiterminator sequence of the ribosomal RNA (rrn) operons.</text>
</comment>
<comment type="similarity">
    <text evidence="1">Belongs to the NusB family.</text>
</comment>
<reference key="1">
    <citation type="journal article" date="2005" name="Nucleic Acids Res.">
        <title>Genome dynamics and diversity of Shigella species, the etiologic agents of bacillary dysentery.</title>
        <authorList>
            <person name="Yang F."/>
            <person name="Yang J."/>
            <person name="Zhang X."/>
            <person name="Chen L."/>
            <person name="Jiang Y."/>
            <person name="Yan Y."/>
            <person name="Tang X."/>
            <person name="Wang J."/>
            <person name="Xiong Z."/>
            <person name="Dong J."/>
            <person name="Xue Y."/>
            <person name="Zhu Y."/>
            <person name="Xu X."/>
            <person name="Sun L."/>
            <person name="Chen S."/>
            <person name="Nie H."/>
            <person name="Peng J."/>
            <person name="Xu J."/>
            <person name="Wang Y."/>
            <person name="Yuan Z."/>
            <person name="Wen Y."/>
            <person name="Yao Z."/>
            <person name="Shen Y."/>
            <person name="Qiang B."/>
            <person name="Hou Y."/>
            <person name="Yu J."/>
            <person name="Jin Q."/>
        </authorList>
    </citation>
    <scope>NUCLEOTIDE SEQUENCE [LARGE SCALE GENOMIC DNA]</scope>
    <source>
        <strain>Ss046</strain>
    </source>
</reference>
<keyword id="KW-1185">Reference proteome</keyword>
<keyword id="KW-0694">RNA-binding</keyword>
<keyword id="KW-0804">Transcription</keyword>
<keyword id="KW-0889">Transcription antitermination</keyword>
<keyword id="KW-0805">Transcription regulation</keyword>
<accession>Q3Z4Z3</accession>
<feature type="chain" id="PRO_0000265594" description="Transcription antitermination protein NusB">
    <location>
        <begin position="1"/>
        <end position="139"/>
    </location>
</feature>
<proteinExistence type="inferred from homology"/>
<organism>
    <name type="scientific">Shigella sonnei (strain Ss046)</name>
    <dbReference type="NCBI Taxonomy" id="300269"/>
    <lineage>
        <taxon>Bacteria</taxon>
        <taxon>Pseudomonadati</taxon>
        <taxon>Pseudomonadota</taxon>
        <taxon>Gammaproteobacteria</taxon>
        <taxon>Enterobacterales</taxon>
        <taxon>Enterobacteriaceae</taxon>
        <taxon>Shigella</taxon>
    </lineage>
</organism>
<gene>
    <name evidence="1" type="primary">nusB</name>
    <name type="ordered locus">SSON_0393</name>
</gene>
<evidence type="ECO:0000255" key="1">
    <source>
        <dbReference type="HAMAP-Rule" id="MF_00073"/>
    </source>
</evidence>
<protein>
    <recommendedName>
        <fullName evidence="1">Transcription antitermination protein NusB</fullName>
    </recommendedName>
    <alternativeName>
        <fullName evidence="1">Antitermination factor NusB</fullName>
    </alternativeName>
</protein>
<sequence>MKPAARRRARECAVQALYSWQLSQNDIADVEYQFLAEQDVKDVDVLYFRELLAGVATNTAYLDGLMKPYLSRLLEELGQVEKAVLRIALYELSKRSDVPYKVAINEAIELAKSFGAEDSHKFVNGVLDKAAPVIRPNKK</sequence>
<dbReference type="EMBL" id="CP000038">
    <property type="protein sequence ID" value="AAZ87169.1"/>
    <property type="molecule type" value="Genomic_DNA"/>
</dbReference>
<dbReference type="RefSeq" id="WP_000801125.1">
    <property type="nucleotide sequence ID" value="NC_007384.1"/>
</dbReference>
<dbReference type="SMR" id="Q3Z4Z3"/>
<dbReference type="GeneID" id="93777044"/>
<dbReference type="KEGG" id="ssn:SSON_0393"/>
<dbReference type="HOGENOM" id="CLU_087843_4_1_6"/>
<dbReference type="Proteomes" id="UP000002529">
    <property type="component" value="Chromosome"/>
</dbReference>
<dbReference type="GO" id="GO:0005829">
    <property type="term" value="C:cytosol"/>
    <property type="evidence" value="ECO:0007669"/>
    <property type="project" value="TreeGrafter"/>
</dbReference>
<dbReference type="GO" id="GO:0003723">
    <property type="term" value="F:RNA binding"/>
    <property type="evidence" value="ECO:0007669"/>
    <property type="project" value="UniProtKB-UniRule"/>
</dbReference>
<dbReference type="GO" id="GO:0006353">
    <property type="term" value="P:DNA-templated transcription termination"/>
    <property type="evidence" value="ECO:0007669"/>
    <property type="project" value="UniProtKB-UniRule"/>
</dbReference>
<dbReference type="GO" id="GO:0031564">
    <property type="term" value="P:transcription antitermination"/>
    <property type="evidence" value="ECO:0007669"/>
    <property type="project" value="UniProtKB-KW"/>
</dbReference>
<dbReference type="CDD" id="cd00619">
    <property type="entry name" value="Terminator_NusB"/>
    <property type="match status" value="1"/>
</dbReference>
<dbReference type="FunFam" id="1.10.940.10:FF:000001">
    <property type="entry name" value="Transcription antitermination factor NusB"/>
    <property type="match status" value="1"/>
</dbReference>
<dbReference type="Gene3D" id="1.10.940.10">
    <property type="entry name" value="NusB-like"/>
    <property type="match status" value="1"/>
</dbReference>
<dbReference type="HAMAP" id="MF_00073">
    <property type="entry name" value="NusB"/>
    <property type="match status" value="1"/>
</dbReference>
<dbReference type="InterPro" id="IPR035926">
    <property type="entry name" value="NusB-like_sf"/>
</dbReference>
<dbReference type="InterPro" id="IPR011605">
    <property type="entry name" value="NusB_fam"/>
</dbReference>
<dbReference type="InterPro" id="IPR006027">
    <property type="entry name" value="NusB_RsmB_TIM44"/>
</dbReference>
<dbReference type="NCBIfam" id="TIGR01951">
    <property type="entry name" value="nusB"/>
    <property type="match status" value="1"/>
</dbReference>
<dbReference type="PANTHER" id="PTHR11078:SF3">
    <property type="entry name" value="ANTITERMINATION NUSB DOMAIN-CONTAINING PROTEIN"/>
    <property type="match status" value="1"/>
</dbReference>
<dbReference type="PANTHER" id="PTHR11078">
    <property type="entry name" value="N UTILIZATION SUBSTANCE PROTEIN B-RELATED"/>
    <property type="match status" value="1"/>
</dbReference>
<dbReference type="Pfam" id="PF01029">
    <property type="entry name" value="NusB"/>
    <property type="match status" value="1"/>
</dbReference>
<dbReference type="SUPFAM" id="SSF48013">
    <property type="entry name" value="NusB-like"/>
    <property type="match status" value="1"/>
</dbReference>
<name>NUSB_SHISS</name>